<organism>
    <name type="scientific">Aspergillus fumigatus (strain ATCC MYA-4609 / CBS 101355 / FGSC A1100 / Af293)</name>
    <name type="common">Neosartorya fumigata</name>
    <dbReference type="NCBI Taxonomy" id="330879"/>
    <lineage>
        <taxon>Eukaryota</taxon>
        <taxon>Fungi</taxon>
        <taxon>Dikarya</taxon>
        <taxon>Ascomycota</taxon>
        <taxon>Pezizomycotina</taxon>
        <taxon>Eurotiomycetes</taxon>
        <taxon>Eurotiomycetidae</taxon>
        <taxon>Eurotiales</taxon>
        <taxon>Aspergillaceae</taxon>
        <taxon>Aspergillus</taxon>
        <taxon>Aspergillus subgen. Fumigati</taxon>
    </lineage>
</organism>
<gene>
    <name evidence="4" type="primary">rodC</name>
    <name type="ORF">AFUA_8G07060</name>
</gene>
<accession>Q4WBR8</accession>
<sequence length="155" mass="16014">MLVTMRLSRSIAVFTLVTYATGLPSLQVIPRGEPQLPLLDPSMTIKEAARKCGDKAQLSCCNRVVKAGDYTSVDEGIGAGLLSNLAGGGSGISSILAFDQCSRLDAQVPVVLLPIQDLLNQHCKQNVACCQKNPGDASSSGVGVSLPCIALGSVA</sequence>
<name>RODC_ASPFU</name>
<keyword id="KW-1015">Disulfide bond</keyword>
<keyword id="KW-1185">Reference proteome</keyword>
<keyword id="KW-0964">Secreted</keyword>
<keyword id="KW-0732">Signal</keyword>
<reference key="1">
    <citation type="journal article" date="2005" name="Nature">
        <title>Genomic sequence of the pathogenic and allergenic filamentous fungus Aspergillus fumigatus.</title>
        <authorList>
            <person name="Nierman W.C."/>
            <person name="Pain A."/>
            <person name="Anderson M.J."/>
            <person name="Wortman J.R."/>
            <person name="Kim H.S."/>
            <person name="Arroyo J."/>
            <person name="Berriman M."/>
            <person name="Abe K."/>
            <person name="Archer D.B."/>
            <person name="Bermejo C."/>
            <person name="Bennett J.W."/>
            <person name="Bowyer P."/>
            <person name="Chen D."/>
            <person name="Collins M."/>
            <person name="Coulsen R."/>
            <person name="Davies R."/>
            <person name="Dyer P.S."/>
            <person name="Farman M.L."/>
            <person name="Fedorova N."/>
            <person name="Fedorova N.D."/>
            <person name="Feldblyum T.V."/>
            <person name="Fischer R."/>
            <person name="Fosker N."/>
            <person name="Fraser A."/>
            <person name="Garcia J.L."/>
            <person name="Garcia M.J."/>
            <person name="Goble A."/>
            <person name="Goldman G.H."/>
            <person name="Gomi K."/>
            <person name="Griffith-Jones S."/>
            <person name="Gwilliam R."/>
            <person name="Haas B.J."/>
            <person name="Haas H."/>
            <person name="Harris D.E."/>
            <person name="Horiuchi H."/>
            <person name="Huang J."/>
            <person name="Humphray S."/>
            <person name="Jimenez J."/>
            <person name="Keller N."/>
            <person name="Khouri H."/>
            <person name="Kitamoto K."/>
            <person name="Kobayashi T."/>
            <person name="Konzack S."/>
            <person name="Kulkarni R."/>
            <person name="Kumagai T."/>
            <person name="Lafton A."/>
            <person name="Latge J.-P."/>
            <person name="Li W."/>
            <person name="Lord A."/>
            <person name="Lu C."/>
            <person name="Majoros W.H."/>
            <person name="May G.S."/>
            <person name="Miller B.L."/>
            <person name="Mohamoud Y."/>
            <person name="Molina M."/>
            <person name="Monod M."/>
            <person name="Mouyna I."/>
            <person name="Mulligan S."/>
            <person name="Murphy L.D."/>
            <person name="O'Neil S."/>
            <person name="Paulsen I."/>
            <person name="Penalva M.A."/>
            <person name="Pertea M."/>
            <person name="Price C."/>
            <person name="Pritchard B.L."/>
            <person name="Quail M.A."/>
            <person name="Rabbinowitsch E."/>
            <person name="Rawlins N."/>
            <person name="Rajandream M.A."/>
            <person name="Reichard U."/>
            <person name="Renauld H."/>
            <person name="Robson G.D."/>
            <person name="Rodriguez de Cordoba S."/>
            <person name="Rodriguez-Pena J.M."/>
            <person name="Ronning C.M."/>
            <person name="Rutter S."/>
            <person name="Salzberg S.L."/>
            <person name="Sanchez M."/>
            <person name="Sanchez-Ferrero J.C."/>
            <person name="Saunders D."/>
            <person name="Seeger K."/>
            <person name="Squares R."/>
            <person name="Squares S."/>
            <person name="Takeuchi M."/>
            <person name="Tekaia F."/>
            <person name="Turner G."/>
            <person name="Vazquez de Aldana C.R."/>
            <person name="Weidman J."/>
            <person name="White O."/>
            <person name="Woodward J.R."/>
            <person name="Yu J.-H."/>
            <person name="Fraser C.M."/>
            <person name="Galagan J.E."/>
            <person name="Asai K."/>
            <person name="Machida M."/>
            <person name="Hall N."/>
            <person name="Barrell B.G."/>
            <person name="Denning D.W."/>
        </authorList>
    </citation>
    <scope>NUCLEOTIDE SEQUENCE [LARGE SCALE GENOMIC DNA]</scope>
    <source>
        <strain>ATCC MYA-4609 / CBS 101355 / FGSC A1100 / Af293</strain>
    </source>
</reference>
<reference key="2">
    <citation type="journal article" date="2017" name="J. Fungi">
        <title>Role of Hydrophobins in Aspergillus fumigatus.</title>
        <authorList>
            <person name="Valsecchi I."/>
            <person name="Dupres V."/>
            <person name="Stephen-Victor E."/>
            <person name="Guijarro J.I."/>
            <person name="Gibbons J."/>
            <person name="Beau R."/>
            <person name="Bayry J."/>
            <person name="Coppee J.Y."/>
            <person name="Lafont F."/>
            <person name="Latge J.P."/>
            <person name="Beauvais A."/>
        </authorList>
    </citation>
    <scope>FUNCTION</scope>
    <scope>INDUCTION</scope>
    <scope>SUBCELLULAR LOCATION</scope>
</reference>
<comment type="function">
    <text evidence="3 5">Aerial growth, conidiation, and dispersal of filamentous fungi in the environment rely upon a capability of their secreting small amphipathic proteins called hydrophobins (HPBs) with low sequence identity. Class I can self-assemble into an outermost layer of rodlet bundles on aerial cell surfaces, conferring cellular hydrophobicity that supports fungal growth, development and dispersal; whereas Class II form highly ordered films at water-air interfaces through intermolecular interactions but contribute nothing to the rodlet structure (Probable). RodC is a class I hydrophobin that, unlike rodA, is not required for rodlet formation (PubMed:29371496).</text>
</comment>
<comment type="subunit">
    <text evidence="1">Self-assembles to form functional amyloid fibrils called rodlets. Self-assembly into fibrillar rodlets occurs spontaneously at hydrophobic:hydrophilic interfaces and the rodlets further associate laterally to form amphipathic monolayers.</text>
</comment>
<comment type="subcellular location">
    <subcellularLocation>
        <location evidence="3">Secreted</location>
    </subcellularLocation>
    <subcellularLocation>
        <location evidence="3">Spore wall</location>
    </subcellularLocation>
</comment>
<comment type="induction">
    <text evidence="3">Primarily expressed in sporulating culture.</text>
</comment>
<comment type="similarity">
    <text evidence="5">Belongs to the fungal hydrophobin family.</text>
</comment>
<evidence type="ECO:0000250" key="1">
    <source>
        <dbReference type="UniProtKB" id="Q04571"/>
    </source>
</evidence>
<evidence type="ECO:0000255" key="2"/>
<evidence type="ECO:0000269" key="3">
    <source>
    </source>
</evidence>
<evidence type="ECO:0000303" key="4">
    <source>
    </source>
</evidence>
<evidence type="ECO:0000305" key="5"/>
<dbReference type="EMBL" id="AAHF01000013">
    <property type="protein sequence ID" value="EAL85466.1"/>
    <property type="molecule type" value="Genomic_DNA"/>
</dbReference>
<dbReference type="RefSeq" id="XP_747504.1">
    <property type="nucleotide sequence ID" value="XM_742411.1"/>
</dbReference>
<dbReference type="STRING" id="330879.Q4WBR8"/>
<dbReference type="EnsemblFungi" id="EAL85466">
    <property type="protein sequence ID" value="EAL85466"/>
    <property type="gene ID" value="AFUA_8G07060"/>
</dbReference>
<dbReference type="GeneID" id="3504907"/>
<dbReference type="KEGG" id="afm:AFUA_8G07060"/>
<dbReference type="VEuPathDB" id="FungiDB:Afu8g07060"/>
<dbReference type="eggNOG" id="ENOG502T10M">
    <property type="taxonomic scope" value="Eukaryota"/>
</dbReference>
<dbReference type="HOGENOM" id="CLU_106380_1_0_1"/>
<dbReference type="InParanoid" id="Q4WBR8"/>
<dbReference type="OMA" id="ILAFDQC"/>
<dbReference type="OrthoDB" id="4225815at2759"/>
<dbReference type="Proteomes" id="UP000002530">
    <property type="component" value="Chromosome 8"/>
</dbReference>
<dbReference type="GO" id="GO:0005576">
    <property type="term" value="C:extracellular region"/>
    <property type="evidence" value="ECO:0007669"/>
    <property type="project" value="UniProtKB-KW"/>
</dbReference>
<dbReference type="GO" id="GO:0009277">
    <property type="term" value="C:fungal-type cell wall"/>
    <property type="evidence" value="ECO:0007669"/>
    <property type="project" value="InterPro"/>
</dbReference>
<dbReference type="GO" id="GO:0005199">
    <property type="term" value="F:structural constituent of cell wall"/>
    <property type="evidence" value="ECO:0007669"/>
    <property type="project" value="InterPro"/>
</dbReference>
<dbReference type="CDD" id="cd23507">
    <property type="entry name" value="hydrophobin_I"/>
    <property type="match status" value="1"/>
</dbReference>
<dbReference type="InterPro" id="IPR001338">
    <property type="entry name" value="Hydrophobin"/>
</dbReference>
<dbReference type="Pfam" id="PF01185">
    <property type="entry name" value="Hydrophobin"/>
    <property type="match status" value="1"/>
</dbReference>
<dbReference type="SMART" id="SM00075">
    <property type="entry name" value="HYDRO"/>
    <property type="match status" value="1"/>
</dbReference>
<dbReference type="PROSITE" id="PS00956">
    <property type="entry name" value="HYDROPHOBIN"/>
    <property type="match status" value="1"/>
</dbReference>
<protein>
    <recommendedName>
        <fullName evidence="4">Class I hydrophobin C</fullName>
    </recommendedName>
    <alternativeName>
        <fullName evidence="4">Rodlet protein C</fullName>
    </alternativeName>
</protein>
<feature type="signal peptide" evidence="2">
    <location>
        <begin position="1"/>
        <end position="22"/>
    </location>
</feature>
<feature type="chain" id="PRO_5013986416" description="Class I hydrophobin C">
    <location>
        <begin position="23"/>
        <end position="155"/>
    </location>
</feature>
<feature type="disulfide bond" evidence="1">
    <location>
        <begin position="52"/>
        <end position="129"/>
    </location>
</feature>
<feature type="disulfide bond" evidence="1">
    <location>
        <begin position="60"/>
        <end position="123"/>
    </location>
</feature>
<feature type="disulfide bond" evidence="1">
    <location>
        <begin position="61"/>
        <end position="101"/>
    </location>
</feature>
<feature type="disulfide bond" evidence="1">
    <location>
        <begin position="130"/>
        <end position="148"/>
    </location>
</feature>
<proteinExistence type="evidence at transcript level"/>